<comment type="function">
    <text evidence="1">Pathogenicity determinant (By similarity). May act as a suppressor of RNA-mediated gene silencing, also known as post-transcriptional gene silencing (PTGS), a mechanism of plant viral defense that limits the accumulation of viral RNAs.</text>
</comment>
<comment type="similarity">
    <text evidence="3">Belongs to the geminiviridae protein AC4/C4 family.</text>
</comment>
<dbReference type="EMBL" id="U65529">
    <property type="protein sequence ID" value="AAB17964.2"/>
    <property type="molecule type" value="Genomic_DNA"/>
</dbReference>
<dbReference type="KEGG" id="vg:993361"/>
<dbReference type="Proteomes" id="UP000007622">
    <property type="component" value="Genome"/>
</dbReference>
<dbReference type="GO" id="GO:0052170">
    <property type="term" value="P:symbiont-mediated suppression of host innate immune response"/>
    <property type="evidence" value="ECO:0007669"/>
    <property type="project" value="UniProtKB-KW"/>
</dbReference>
<evidence type="ECO:0000250" key="1"/>
<evidence type="ECO:0000256" key="2">
    <source>
        <dbReference type="SAM" id="MobiDB-lite"/>
    </source>
</evidence>
<evidence type="ECO:0000305" key="3"/>
<name>AC4_CALCV</name>
<reference key="1">
    <citation type="journal article" date="1992" name="Phytopathology">
        <title>Cloning, identification and partial sequencing of a new geminivirus infecting Brassicaceae.</title>
        <authorList>
            <person name="Abouzid A.M."/>
            <person name="Hiebert E."/>
            <person name="Strandberg J.O."/>
        </authorList>
    </citation>
    <scope>NUCLEOTIDE SEQUENCE [GENOMIC DNA]</scope>
</reference>
<reference key="2">
    <citation type="submission" date="2001-08" db="EMBL/GenBank/DDBJ databases">
        <authorList>
            <person name="Abouzid A.M."/>
            <person name="Hiebert E."/>
            <person name="Strandberg J.O."/>
        </authorList>
    </citation>
    <scope>SEQUENCE REVISION</scope>
</reference>
<organism>
    <name type="scientific">Cabbage leaf curl virus (isolate Jamaica)</name>
    <name type="common">CaLCuV</name>
    <dbReference type="NCBI Taxonomy" id="345184"/>
    <lineage>
        <taxon>Viruses</taxon>
        <taxon>Monodnaviria</taxon>
        <taxon>Shotokuvirae</taxon>
        <taxon>Cressdnaviricota</taxon>
        <taxon>Repensiviricetes</taxon>
        <taxon>Geplafuvirales</taxon>
        <taxon>Geminiviridae</taxon>
        <taxon>Begomovirus</taxon>
    </lineage>
</organism>
<accession>Q96705</accession>
<keyword id="KW-0945">Host-virus interaction</keyword>
<keyword id="KW-1090">Inhibition of host innate immune response by virus</keyword>
<keyword id="KW-0941">Suppressor of RNA silencing</keyword>
<keyword id="KW-0899">Viral immunoevasion</keyword>
<feature type="chain" id="PRO_0000323688" description="Protein AC4">
    <location>
        <begin position="1"/>
        <end position="121"/>
    </location>
</feature>
<feature type="region of interest" description="Disordered" evidence="2">
    <location>
        <begin position="11"/>
        <end position="30"/>
    </location>
</feature>
<feature type="compositionally biased region" description="Polar residues" evidence="2">
    <location>
        <begin position="12"/>
        <end position="30"/>
    </location>
</feature>
<sequence length="121" mass="13744">MKLFRCFKPCRGQSSNPHTSESQERNIQTGSPIYTVSSNYQESRTSRMLDFSTSLTPEGLPIFTQTFRQPKTPMPSRITSPKMVIIVNPGSTRCLGVQRQIKTTSTTTPSMRDVWKRLSQL</sequence>
<proteinExistence type="inferred from homology"/>
<organismHost>
    <name type="scientific">Brassica oleracea</name>
    <name type="common">Wild cabbage</name>
    <dbReference type="NCBI Taxonomy" id="3712"/>
</organismHost>
<protein>
    <recommendedName>
        <fullName>Protein AC4</fullName>
    </recommendedName>
    <alternativeName>
        <fullName>Protein AL4</fullName>
    </alternativeName>
</protein>
<gene>
    <name type="ORF">AC4</name>
    <name type="ORF">AL4</name>
</gene>